<feature type="chain" id="PRO_0000223539" description="Ribosomal RNA small subunit methyltransferase H">
    <location>
        <begin position="1"/>
        <end position="308"/>
    </location>
</feature>
<feature type="binding site" evidence="1">
    <location>
        <begin position="35"/>
        <end position="37"/>
    </location>
    <ligand>
        <name>S-adenosyl-L-methionine</name>
        <dbReference type="ChEBI" id="CHEBI:59789"/>
    </ligand>
</feature>
<feature type="binding site" evidence="1">
    <location>
        <position position="55"/>
    </location>
    <ligand>
        <name>S-adenosyl-L-methionine</name>
        <dbReference type="ChEBI" id="CHEBI:59789"/>
    </ligand>
</feature>
<feature type="binding site" evidence="1">
    <location>
        <position position="79"/>
    </location>
    <ligand>
        <name>S-adenosyl-L-methionine</name>
        <dbReference type="ChEBI" id="CHEBI:59789"/>
    </ligand>
</feature>
<feature type="binding site" evidence="1">
    <location>
        <position position="100"/>
    </location>
    <ligand>
        <name>S-adenosyl-L-methionine</name>
        <dbReference type="ChEBI" id="CHEBI:59789"/>
    </ligand>
</feature>
<feature type="binding site" evidence="1">
    <location>
        <position position="107"/>
    </location>
    <ligand>
        <name>S-adenosyl-L-methionine</name>
        <dbReference type="ChEBI" id="CHEBI:59789"/>
    </ligand>
</feature>
<reference key="1">
    <citation type="journal article" date="2009" name="BMC Genomics">
        <title>Metabolic analysis of the soil microbe Dechloromonas aromatica str. RCB: indications of a surprisingly complex life-style and cryptic anaerobic pathways for aromatic degradation.</title>
        <authorList>
            <person name="Salinero K.K."/>
            <person name="Keller K."/>
            <person name="Feil W.S."/>
            <person name="Feil H."/>
            <person name="Trong S."/>
            <person name="Di Bartolo G."/>
            <person name="Lapidus A."/>
        </authorList>
    </citation>
    <scope>NUCLEOTIDE SEQUENCE [LARGE SCALE GENOMIC DNA]</scope>
    <source>
        <strain>RCB</strain>
    </source>
</reference>
<keyword id="KW-0963">Cytoplasm</keyword>
<keyword id="KW-0489">Methyltransferase</keyword>
<keyword id="KW-0698">rRNA processing</keyword>
<keyword id="KW-0949">S-adenosyl-L-methionine</keyword>
<keyword id="KW-0808">Transferase</keyword>
<protein>
    <recommendedName>
        <fullName evidence="1">Ribosomal RNA small subunit methyltransferase H</fullName>
        <ecNumber evidence="1">2.1.1.199</ecNumber>
    </recommendedName>
    <alternativeName>
        <fullName evidence="1">16S rRNA m(4)C1402 methyltransferase</fullName>
    </alternativeName>
    <alternativeName>
        <fullName evidence="1">rRNA (cytosine-N(4)-)-methyltransferase RsmH</fullName>
    </alternativeName>
</protein>
<accession>Q47A96</accession>
<organism>
    <name type="scientific">Dechloromonas aromatica (strain RCB)</name>
    <dbReference type="NCBI Taxonomy" id="159087"/>
    <lineage>
        <taxon>Bacteria</taxon>
        <taxon>Pseudomonadati</taxon>
        <taxon>Pseudomonadota</taxon>
        <taxon>Betaproteobacteria</taxon>
        <taxon>Rhodocyclales</taxon>
        <taxon>Azonexaceae</taxon>
        <taxon>Dechloromonas</taxon>
    </lineage>
</organism>
<proteinExistence type="inferred from homology"/>
<dbReference type="EC" id="2.1.1.199" evidence="1"/>
<dbReference type="EMBL" id="CP000089">
    <property type="protein sequence ID" value="AAZ48235.1"/>
    <property type="molecule type" value="Genomic_DNA"/>
</dbReference>
<dbReference type="SMR" id="Q47A96"/>
<dbReference type="STRING" id="159087.Daro_3506"/>
<dbReference type="KEGG" id="dar:Daro_3506"/>
<dbReference type="eggNOG" id="COG0275">
    <property type="taxonomic scope" value="Bacteria"/>
</dbReference>
<dbReference type="HOGENOM" id="CLU_038422_2_0_4"/>
<dbReference type="OrthoDB" id="9806637at2"/>
<dbReference type="GO" id="GO:0005737">
    <property type="term" value="C:cytoplasm"/>
    <property type="evidence" value="ECO:0007669"/>
    <property type="project" value="UniProtKB-SubCell"/>
</dbReference>
<dbReference type="GO" id="GO:0071424">
    <property type="term" value="F:rRNA (cytosine-N4-)-methyltransferase activity"/>
    <property type="evidence" value="ECO:0007669"/>
    <property type="project" value="UniProtKB-UniRule"/>
</dbReference>
<dbReference type="GO" id="GO:0070475">
    <property type="term" value="P:rRNA base methylation"/>
    <property type="evidence" value="ECO:0007669"/>
    <property type="project" value="UniProtKB-UniRule"/>
</dbReference>
<dbReference type="Gene3D" id="1.10.150.170">
    <property type="entry name" value="Putative methyltransferase TM0872, insert domain"/>
    <property type="match status" value="1"/>
</dbReference>
<dbReference type="Gene3D" id="3.40.50.150">
    <property type="entry name" value="Vaccinia Virus protein VP39"/>
    <property type="match status" value="1"/>
</dbReference>
<dbReference type="HAMAP" id="MF_01007">
    <property type="entry name" value="16SrRNA_methyltr_H"/>
    <property type="match status" value="1"/>
</dbReference>
<dbReference type="InterPro" id="IPR002903">
    <property type="entry name" value="RsmH"/>
</dbReference>
<dbReference type="InterPro" id="IPR023397">
    <property type="entry name" value="SAM-dep_MeTrfase_MraW_recog"/>
</dbReference>
<dbReference type="InterPro" id="IPR029063">
    <property type="entry name" value="SAM-dependent_MTases_sf"/>
</dbReference>
<dbReference type="NCBIfam" id="TIGR00006">
    <property type="entry name" value="16S rRNA (cytosine(1402)-N(4))-methyltransferase RsmH"/>
    <property type="match status" value="1"/>
</dbReference>
<dbReference type="PANTHER" id="PTHR11265:SF0">
    <property type="entry name" value="12S RRNA N4-METHYLCYTIDINE METHYLTRANSFERASE"/>
    <property type="match status" value="1"/>
</dbReference>
<dbReference type="PANTHER" id="PTHR11265">
    <property type="entry name" value="S-ADENOSYL-METHYLTRANSFERASE MRAW"/>
    <property type="match status" value="1"/>
</dbReference>
<dbReference type="Pfam" id="PF01795">
    <property type="entry name" value="Methyltransf_5"/>
    <property type="match status" value="1"/>
</dbReference>
<dbReference type="PIRSF" id="PIRSF004486">
    <property type="entry name" value="MraW"/>
    <property type="match status" value="1"/>
</dbReference>
<dbReference type="SUPFAM" id="SSF81799">
    <property type="entry name" value="Putative methyltransferase TM0872, insert domain"/>
    <property type="match status" value="1"/>
</dbReference>
<dbReference type="SUPFAM" id="SSF53335">
    <property type="entry name" value="S-adenosyl-L-methionine-dependent methyltransferases"/>
    <property type="match status" value="1"/>
</dbReference>
<gene>
    <name evidence="1" type="primary">rsmH</name>
    <name type="synonym">mraW</name>
    <name type="ordered locus">Daro_3506</name>
</gene>
<name>RSMH_DECAR</name>
<sequence length="308" mass="33978">MTRSTAHVTVLLEEAVGALAIKADGVYVDATFGRGGHSRRILSELNQNGRLVAVDRDPQAIAAGAEIDDSRFLLVHRAFGELAEAADEAGIRDVDGVLFDVGVSSPQIDDGERGFSFRYDAPLDMRMDTTQGETAAEWLARAEIRDITEVIRNYGEERFAFQIAKKVVAARLEQPIVTTGQFAALVRETVRTREPGQDPATRSFQALRIHINQELRQLEVALPQALELLKPGGRLVVISFHSLEDRIVKNFMRDQSIADAMPKSLPLRADQLPKPKLRLVGRPIKPSAAEIDANPRARSAVMRIAEKL</sequence>
<comment type="function">
    <text evidence="1">Specifically methylates the N4 position of cytidine in position 1402 (C1402) of 16S rRNA.</text>
</comment>
<comment type="catalytic activity">
    <reaction evidence="1">
        <text>cytidine(1402) in 16S rRNA + S-adenosyl-L-methionine = N(4)-methylcytidine(1402) in 16S rRNA + S-adenosyl-L-homocysteine + H(+)</text>
        <dbReference type="Rhea" id="RHEA:42928"/>
        <dbReference type="Rhea" id="RHEA-COMP:10286"/>
        <dbReference type="Rhea" id="RHEA-COMP:10287"/>
        <dbReference type="ChEBI" id="CHEBI:15378"/>
        <dbReference type="ChEBI" id="CHEBI:57856"/>
        <dbReference type="ChEBI" id="CHEBI:59789"/>
        <dbReference type="ChEBI" id="CHEBI:74506"/>
        <dbReference type="ChEBI" id="CHEBI:82748"/>
        <dbReference type="EC" id="2.1.1.199"/>
    </reaction>
</comment>
<comment type="subcellular location">
    <subcellularLocation>
        <location evidence="1">Cytoplasm</location>
    </subcellularLocation>
</comment>
<comment type="similarity">
    <text evidence="1">Belongs to the methyltransferase superfamily. RsmH family.</text>
</comment>
<evidence type="ECO:0000255" key="1">
    <source>
        <dbReference type="HAMAP-Rule" id="MF_01007"/>
    </source>
</evidence>